<keyword id="KW-0961">Cell wall biogenesis/degradation</keyword>
<keyword id="KW-1015">Disulfide bond</keyword>
<keyword id="KW-0325">Glycoprotein</keyword>
<keyword id="KW-0326">Glycosidase</keyword>
<keyword id="KW-0378">Hydrolase</keyword>
<keyword id="KW-1185">Reference proteome</keyword>
<keyword id="KW-0677">Repeat</keyword>
<keyword id="KW-0964">Secreted</keyword>
<keyword id="KW-0732">Signal</keyword>
<gene>
    <name type="primary">pgxB</name>
    <name type="ORF">An03g06740</name>
</gene>
<protein>
    <recommendedName>
        <fullName>Probable exopolygalacturonase B</fullName>
        <ecNumber>3.2.1.67</ecNumber>
    </recommendedName>
    <alternativeName>
        <fullName>Galacturan 1,4-alpha-galacturonidase B</fullName>
    </alternativeName>
    <alternativeName>
        <fullName>Poly(1,4-alpha-D-galacturonide)galacturonohydrolase B</fullName>
    </alternativeName>
</protein>
<proteinExistence type="inferred from homology"/>
<name>PGXB_ASPNC</name>
<feature type="signal peptide" evidence="2">
    <location>
        <begin position="1"/>
        <end position="15"/>
    </location>
</feature>
<feature type="chain" id="PRO_5000219824" description="Probable exopolygalacturonase B">
    <location>
        <begin position="16"/>
        <end position="438"/>
    </location>
</feature>
<feature type="repeat" description="PbH1 1">
    <location>
        <begin position="209"/>
        <end position="248"/>
    </location>
</feature>
<feature type="repeat" description="PbH1 2">
    <location>
        <begin position="295"/>
        <end position="316"/>
    </location>
</feature>
<feature type="repeat" description="PbH1 3">
    <location>
        <begin position="327"/>
        <end position="348"/>
    </location>
</feature>
<feature type="repeat" description="PbH1 4">
    <location>
        <begin position="398"/>
        <end position="430"/>
    </location>
</feature>
<feature type="active site" description="Proton donor" evidence="1">
    <location>
        <position position="255"/>
    </location>
</feature>
<feature type="active site" evidence="1">
    <location>
        <position position="278"/>
    </location>
</feature>
<feature type="glycosylation site" description="N-linked (GlcNAc...) asparagine" evidence="2">
    <location>
        <position position="118"/>
    </location>
</feature>
<feature type="glycosylation site" description="N-linked (GlcNAc...) asparagine" evidence="2">
    <location>
        <position position="185"/>
    </location>
</feature>
<feature type="glycosylation site" description="N-linked (GlcNAc...) asparagine" evidence="2">
    <location>
        <position position="225"/>
    </location>
</feature>
<feature type="glycosylation site" description="N-linked (GlcNAc...) asparagine" evidence="2">
    <location>
        <position position="263"/>
    </location>
</feature>
<feature type="glycosylation site" description="N-linked (GlcNAc...) asparagine" evidence="2">
    <location>
        <position position="275"/>
    </location>
</feature>
<feature type="glycosylation site" description="N-linked (GlcNAc...) asparagine" evidence="2">
    <location>
        <position position="302"/>
    </location>
</feature>
<feature type="glycosylation site" description="N-linked (GlcNAc...) asparagine" evidence="2">
    <location>
        <position position="329"/>
    </location>
</feature>
<feature type="glycosylation site" description="N-linked (GlcNAc...) asparagine" evidence="2">
    <location>
        <position position="354"/>
    </location>
</feature>
<feature type="glycosylation site" description="N-linked (GlcNAc...) asparagine" evidence="2">
    <location>
        <position position="366"/>
    </location>
</feature>
<feature type="glycosylation site" description="N-linked (GlcNAc...) asparagine" evidence="2">
    <location>
        <position position="400"/>
    </location>
</feature>
<feature type="glycosylation site" description="N-linked (GlcNAc...) asparagine" evidence="2">
    <location>
        <position position="407"/>
    </location>
</feature>
<feature type="disulfide bond" evidence="1">
    <location>
        <begin position="257"/>
        <end position="274"/>
    </location>
</feature>
<feature type="disulfide bond" evidence="1">
    <location>
        <begin position="392"/>
        <end position="398"/>
    </location>
</feature>
<reference key="1">
    <citation type="journal article" date="2007" name="Nat. Biotechnol.">
        <title>Genome sequencing and analysis of the versatile cell factory Aspergillus niger CBS 513.88.</title>
        <authorList>
            <person name="Pel H.J."/>
            <person name="de Winde J.H."/>
            <person name="Archer D.B."/>
            <person name="Dyer P.S."/>
            <person name="Hofmann G."/>
            <person name="Schaap P.J."/>
            <person name="Turner G."/>
            <person name="de Vries R.P."/>
            <person name="Albang R."/>
            <person name="Albermann K."/>
            <person name="Andersen M.R."/>
            <person name="Bendtsen J.D."/>
            <person name="Benen J.A.E."/>
            <person name="van den Berg M."/>
            <person name="Breestraat S."/>
            <person name="Caddick M.X."/>
            <person name="Contreras R."/>
            <person name="Cornell M."/>
            <person name="Coutinho P.M."/>
            <person name="Danchin E.G.J."/>
            <person name="Debets A.J.M."/>
            <person name="Dekker P."/>
            <person name="van Dijck P.W.M."/>
            <person name="van Dijk A."/>
            <person name="Dijkhuizen L."/>
            <person name="Driessen A.J.M."/>
            <person name="d'Enfert C."/>
            <person name="Geysens S."/>
            <person name="Goosen C."/>
            <person name="Groot G.S.P."/>
            <person name="de Groot P.W.J."/>
            <person name="Guillemette T."/>
            <person name="Henrissat B."/>
            <person name="Herweijer M."/>
            <person name="van den Hombergh J.P.T.W."/>
            <person name="van den Hondel C.A.M.J.J."/>
            <person name="van der Heijden R.T.J.M."/>
            <person name="van der Kaaij R.M."/>
            <person name="Klis F.M."/>
            <person name="Kools H.J."/>
            <person name="Kubicek C.P."/>
            <person name="van Kuyk P.A."/>
            <person name="Lauber J."/>
            <person name="Lu X."/>
            <person name="van der Maarel M.J.E.C."/>
            <person name="Meulenberg R."/>
            <person name="Menke H."/>
            <person name="Mortimer M.A."/>
            <person name="Nielsen J."/>
            <person name="Oliver S.G."/>
            <person name="Olsthoorn M."/>
            <person name="Pal K."/>
            <person name="van Peij N.N.M.E."/>
            <person name="Ram A.F.J."/>
            <person name="Rinas U."/>
            <person name="Roubos J.A."/>
            <person name="Sagt C.M.J."/>
            <person name="Schmoll M."/>
            <person name="Sun J."/>
            <person name="Ussery D."/>
            <person name="Varga J."/>
            <person name="Vervecken W."/>
            <person name="van de Vondervoort P.J.J."/>
            <person name="Wedler H."/>
            <person name="Woesten H.A.B."/>
            <person name="Zeng A.-P."/>
            <person name="van Ooyen A.J.J."/>
            <person name="Visser J."/>
            <person name="Stam H."/>
        </authorList>
    </citation>
    <scope>NUCLEOTIDE SEQUENCE [LARGE SCALE GENOMIC DNA]</scope>
    <source>
        <strain>ATCC MYA-4892 / CBS 513.88 / FGSC A1513</strain>
    </source>
</reference>
<accession>A2QHG0</accession>
<organism>
    <name type="scientific">Aspergillus niger (strain ATCC MYA-4892 / CBS 513.88 / FGSC A1513)</name>
    <dbReference type="NCBI Taxonomy" id="425011"/>
    <lineage>
        <taxon>Eukaryota</taxon>
        <taxon>Fungi</taxon>
        <taxon>Dikarya</taxon>
        <taxon>Ascomycota</taxon>
        <taxon>Pezizomycotina</taxon>
        <taxon>Eurotiomycetes</taxon>
        <taxon>Eurotiomycetidae</taxon>
        <taxon>Eurotiales</taxon>
        <taxon>Aspergillaceae</taxon>
        <taxon>Aspergillus</taxon>
        <taxon>Aspergillus subgen. Circumdati</taxon>
    </lineage>
</organism>
<evidence type="ECO:0000250" key="1"/>
<evidence type="ECO:0000255" key="2"/>
<evidence type="ECO:0000305" key="3"/>
<comment type="function">
    <text evidence="1">Specific in hydrolyzing the terminal glycosidic bond of polygalacturonic acid and oligogalacturonates.</text>
</comment>
<comment type="catalytic activity">
    <reaction>
        <text>[(1-&gt;4)-alpha-D-galacturonosyl](n) + H2O = alpha-D-galacturonate + [(1-&gt;4)-alpha-D-galacturonosyl](n-1)</text>
        <dbReference type="Rhea" id="RHEA:14117"/>
        <dbReference type="Rhea" id="RHEA-COMP:14570"/>
        <dbReference type="Rhea" id="RHEA-COMP:14572"/>
        <dbReference type="ChEBI" id="CHEBI:15377"/>
        <dbReference type="ChEBI" id="CHEBI:58658"/>
        <dbReference type="ChEBI" id="CHEBI:140523"/>
        <dbReference type="EC" id="3.2.1.67"/>
    </reaction>
</comment>
<comment type="subcellular location">
    <subcellularLocation>
        <location evidence="1">Secreted</location>
    </subcellularLocation>
</comment>
<comment type="similarity">
    <text evidence="3">Belongs to the glycosyl hydrolase 28 family.</text>
</comment>
<sequence>MYLLPLTLFLTAAFGVSIPRSPLIPGAQIVPASSTADLRAIGAQHHKYPDRETVTIRASRNALDDVSSDFLWGLKQANHGGRLLLKQGETYVIGKKLDLTFLDNIEVQLEGEIQFTNNITYWQANNFYYDFQKSITFWRWGGQDIKIFGSGVLNGNGQKWYDEFAGKQILVYNTFYRPILFLTDNATRISVEGITQLNSPCWTNFFVRTNDVSFDNVYIHAFSTNASSDPANTDGMDSLDVDGVSFTNMRIDVGDDCFSPKPNTTNIFVQNMWCNNTHGVSMGSIGQYAGEMDIIENVYIENVTLLNGQNGARLKAWAGQDVGYGRINNVTYKNIQIQNTDAPIVLDQCYFDINATECAKYPSAVNITNILFENIWGSSSGKDGKIVADLVCSPDAVCTNITLSNVNLTSPKGTAEIVCDDIQGGIGVDCVSDESVTR</sequence>
<dbReference type="EC" id="3.2.1.67"/>
<dbReference type="EMBL" id="AM270061">
    <property type="protein sequence ID" value="CAK38430.1"/>
    <property type="molecule type" value="Genomic_DNA"/>
</dbReference>
<dbReference type="SMR" id="A2QHG0"/>
<dbReference type="CAZy" id="GH28">
    <property type="family name" value="Glycoside Hydrolase Family 28"/>
</dbReference>
<dbReference type="GlyCosmos" id="A2QHG0">
    <property type="glycosylation" value="11 sites, No reported glycans"/>
</dbReference>
<dbReference type="EnsemblFungi" id="CAK38430">
    <property type="protein sequence ID" value="CAK38430"/>
    <property type="gene ID" value="An03g06740"/>
</dbReference>
<dbReference type="HOGENOM" id="CLU_016031_1_0_1"/>
<dbReference type="Proteomes" id="UP000006706">
    <property type="component" value="Chromosome 6R"/>
</dbReference>
<dbReference type="GO" id="GO:0005576">
    <property type="term" value="C:extracellular region"/>
    <property type="evidence" value="ECO:0000250"/>
    <property type="project" value="UniProtKB"/>
</dbReference>
<dbReference type="GO" id="GO:0047911">
    <property type="term" value="F:galacturan 1,4-alpha-galacturonidase activity"/>
    <property type="evidence" value="ECO:0007669"/>
    <property type="project" value="UniProtKB-EC"/>
</dbReference>
<dbReference type="GO" id="GO:0004650">
    <property type="term" value="F:polygalacturonase activity"/>
    <property type="evidence" value="ECO:0000250"/>
    <property type="project" value="UniProtKB"/>
</dbReference>
<dbReference type="GO" id="GO:0071555">
    <property type="term" value="P:cell wall organization"/>
    <property type="evidence" value="ECO:0007669"/>
    <property type="project" value="UniProtKB-KW"/>
</dbReference>
<dbReference type="GO" id="GO:0045490">
    <property type="term" value="P:pectin catabolic process"/>
    <property type="evidence" value="ECO:0000250"/>
    <property type="project" value="UniProtKB"/>
</dbReference>
<dbReference type="FunFam" id="2.160.20.10:FF:000040">
    <property type="entry name" value="Probable exopolygalacturonase B"/>
    <property type="match status" value="1"/>
</dbReference>
<dbReference type="Gene3D" id="2.160.20.10">
    <property type="entry name" value="Single-stranded right-handed beta-helix, Pectin lyase-like"/>
    <property type="match status" value="1"/>
</dbReference>
<dbReference type="InterPro" id="IPR000743">
    <property type="entry name" value="Glyco_hydro_28"/>
</dbReference>
<dbReference type="InterPro" id="IPR012334">
    <property type="entry name" value="Pectin_lyas_fold"/>
</dbReference>
<dbReference type="InterPro" id="IPR011050">
    <property type="entry name" value="Pectin_lyase_fold/virulence"/>
</dbReference>
<dbReference type="PANTHER" id="PTHR31736">
    <property type="match status" value="1"/>
</dbReference>
<dbReference type="PANTHER" id="PTHR31736:SF6">
    <property type="entry name" value="EXOPOLYGALACTURONASE B-RELATED"/>
    <property type="match status" value="1"/>
</dbReference>
<dbReference type="Pfam" id="PF00295">
    <property type="entry name" value="Glyco_hydro_28"/>
    <property type="match status" value="1"/>
</dbReference>
<dbReference type="SUPFAM" id="SSF51126">
    <property type="entry name" value="Pectin lyase-like"/>
    <property type="match status" value="1"/>
</dbReference>